<name>ASTE_YERP3</name>
<keyword id="KW-0056">Arginine metabolism</keyword>
<keyword id="KW-0378">Hydrolase</keyword>
<keyword id="KW-0479">Metal-binding</keyword>
<keyword id="KW-0862">Zinc</keyword>
<comment type="function">
    <text evidence="1">Transforms N(2)-succinylglutamate into succinate and glutamate.</text>
</comment>
<comment type="catalytic activity">
    <reaction evidence="1">
        <text>N-succinyl-L-glutamate + H2O = L-glutamate + succinate</text>
        <dbReference type="Rhea" id="RHEA:15169"/>
        <dbReference type="ChEBI" id="CHEBI:15377"/>
        <dbReference type="ChEBI" id="CHEBI:29985"/>
        <dbReference type="ChEBI" id="CHEBI:30031"/>
        <dbReference type="ChEBI" id="CHEBI:58763"/>
        <dbReference type="EC" id="3.5.1.96"/>
    </reaction>
</comment>
<comment type="cofactor">
    <cofactor evidence="1">
        <name>Zn(2+)</name>
        <dbReference type="ChEBI" id="CHEBI:29105"/>
    </cofactor>
    <text evidence="1">Binds 1 zinc ion per subunit.</text>
</comment>
<comment type="pathway">
    <text evidence="1">Amino-acid degradation; L-arginine degradation via AST pathway; L-glutamate and succinate from L-arginine: step 5/5.</text>
</comment>
<comment type="similarity">
    <text evidence="1">Belongs to the AspA/AstE family. Succinylglutamate desuccinylase subfamily.</text>
</comment>
<dbReference type="EC" id="3.5.1.96" evidence="1"/>
<dbReference type="EMBL" id="CP000720">
    <property type="protein sequence ID" value="ABS49182.1"/>
    <property type="molecule type" value="Genomic_DNA"/>
</dbReference>
<dbReference type="RefSeq" id="WP_002212028.1">
    <property type="nucleotide sequence ID" value="NC_009708.1"/>
</dbReference>
<dbReference type="SMR" id="A7FIL2"/>
<dbReference type="GeneID" id="49786048"/>
<dbReference type="KEGG" id="ypi:YpsIP31758_2117"/>
<dbReference type="HOGENOM" id="CLU_071608_0_0_6"/>
<dbReference type="UniPathway" id="UPA00185">
    <property type="reaction ID" value="UER00283"/>
</dbReference>
<dbReference type="Proteomes" id="UP000002412">
    <property type="component" value="Chromosome"/>
</dbReference>
<dbReference type="GO" id="GO:0016788">
    <property type="term" value="F:hydrolase activity, acting on ester bonds"/>
    <property type="evidence" value="ECO:0007669"/>
    <property type="project" value="UniProtKB-UniRule"/>
</dbReference>
<dbReference type="GO" id="GO:0009017">
    <property type="term" value="F:succinylglutamate desuccinylase activity"/>
    <property type="evidence" value="ECO:0007669"/>
    <property type="project" value="UniProtKB-EC"/>
</dbReference>
<dbReference type="GO" id="GO:0008270">
    <property type="term" value="F:zinc ion binding"/>
    <property type="evidence" value="ECO:0007669"/>
    <property type="project" value="UniProtKB-UniRule"/>
</dbReference>
<dbReference type="GO" id="GO:0019544">
    <property type="term" value="P:arginine catabolic process to glutamate"/>
    <property type="evidence" value="ECO:0007669"/>
    <property type="project" value="UniProtKB-UniRule"/>
</dbReference>
<dbReference type="GO" id="GO:0019545">
    <property type="term" value="P:arginine catabolic process to succinate"/>
    <property type="evidence" value="ECO:0007669"/>
    <property type="project" value="UniProtKB-UniRule"/>
</dbReference>
<dbReference type="CDD" id="cd03855">
    <property type="entry name" value="M14_ASTE"/>
    <property type="match status" value="1"/>
</dbReference>
<dbReference type="FunFam" id="3.40.630.10:FF:000017">
    <property type="entry name" value="Succinylglutamate desuccinylase"/>
    <property type="match status" value="1"/>
</dbReference>
<dbReference type="Gene3D" id="3.40.630.10">
    <property type="entry name" value="Zn peptidases"/>
    <property type="match status" value="1"/>
</dbReference>
<dbReference type="HAMAP" id="MF_00767">
    <property type="entry name" value="Arg_catab_AstE"/>
    <property type="match status" value="1"/>
</dbReference>
<dbReference type="InterPro" id="IPR050178">
    <property type="entry name" value="AspA/AstE_fam"/>
</dbReference>
<dbReference type="InterPro" id="IPR055438">
    <property type="entry name" value="AstE_AspA_cat"/>
</dbReference>
<dbReference type="InterPro" id="IPR007036">
    <property type="entry name" value="Aste_AspA_hybrid_dom"/>
</dbReference>
<dbReference type="InterPro" id="IPR016681">
    <property type="entry name" value="SuccinylGlu_desuccinylase"/>
</dbReference>
<dbReference type="NCBIfam" id="TIGR03242">
    <property type="entry name" value="arg_catab_astE"/>
    <property type="match status" value="1"/>
</dbReference>
<dbReference type="NCBIfam" id="NF003706">
    <property type="entry name" value="PRK05324.1"/>
    <property type="match status" value="1"/>
</dbReference>
<dbReference type="PANTHER" id="PTHR15162">
    <property type="entry name" value="ASPARTOACYLASE"/>
    <property type="match status" value="1"/>
</dbReference>
<dbReference type="PANTHER" id="PTHR15162:SF7">
    <property type="entry name" value="SUCCINYLGLUTAMATE DESUCCINYLASE"/>
    <property type="match status" value="1"/>
</dbReference>
<dbReference type="Pfam" id="PF24827">
    <property type="entry name" value="AstE_AspA_cat"/>
    <property type="match status" value="1"/>
</dbReference>
<dbReference type="Pfam" id="PF04952">
    <property type="entry name" value="AstE_AspA_hybrid"/>
    <property type="match status" value="1"/>
</dbReference>
<dbReference type="PIRSF" id="PIRSF017020">
    <property type="entry name" value="AstE"/>
    <property type="match status" value="1"/>
</dbReference>
<dbReference type="SUPFAM" id="SSF53187">
    <property type="entry name" value="Zn-dependent exopeptidases"/>
    <property type="match status" value="1"/>
</dbReference>
<proteinExistence type="inferred from homology"/>
<gene>
    <name evidence="1" type="primary">astE</name>
    <name type="ordered locus">YpsIP31758_2117</name>
</gene>
<protein>
    <recommendedName>
        <fullName evidence="1">Succinylglutamate desuccinylase</fullName>
        <ecNumber evidence="1">3.5.1.96</ecNumber>
    </recommendedName>
</protein>
<evidence type="ECO:0000255" key="1">
    <source>
        <dbReference type="HAMAP-Rule" id="MF_00767"/>
    </source>
</evidence>
<sequence>MLDFLAITLSGKPPQVIQGETVNLKWQWLGEGILTLVPHRSYTQSVVISAGIHGNETAPIEILNQLVTDLLAGQLPLSVRLLVLLGNPPAIRKGKRYLSNDINRMFGGRYQHYTPSDETRRASTLEQRVMAFFQASHTSERLHYDLHTAIRGSYHPRFGLLPYQQTPYSAAMFRWLRDIELDALVMHTSAGGTFAHFSSERCQAASCTLELGKALPFGENQLSQFSAITQGLRSLVSDSALPARKTENMKYYRVVKSLLRQHPDFKLRVAEDTVNFTRFAQGTLLTEQPNDNYRVEHPYEWILFPNPHVALGLRAGMMLVKMCESELPIT</sequence>
<feature type="chain" id="PRO_1000062234" description="Succinylglutamate desuccinylase">
    <location>
        <begin position="1"/>
        <end position="330"/>
    </location>
</feature>
<feature type="active site" evidence="1">
    <location>
        <position position="210"/>
    </location>
</feature>
<feature type="binding site" evidence="1">
    <location>
        <position position="53"/>
    </location>
    <ligand>
        <name>Zn(2+)</name>
        <dbReference type="ChEBI" id="CHEBI:29105"/>
    </ligand>
</feature>
<feature type="binding site" evidence="1">
    <location>
        <position position="56"/>
    </location>
    <ligand>
        <name>Zn(2+)</name>
        <dbReference type="ChEBI" id="CHEBI:29105"/>
    </ligand>
</feature>
<feature type="binding site" evidence="1">
    <location>
        <position position="147"/>
    </location>
    <ligand>
        <name>Zn(2+)</name>
        <dbReference type="ChEBI" id="CHEBI:29105"/>
    </ligand>
</feature>
<organism>
    <name type="scientific">Yersinia pseudotuberculosis serotype O:1b (strain IP 31758)</name>
    <dbReference type="NCBI Taxonomy" id="349747"/>
    <lineage>
        <taxon>Bacteria</taxon>
        <taxon>Pseudomonadati</taxon>
        <taxon>Pseudomonadota</taxon>
        <taxon>Gammaproteobacteria</taxon>
        <taxon>Enterobacterales</taxon>
        <taxon>Yersiniaceae</taxon>
        <taxon>Yersinia</taxon>
    </lineage>
</organism>
<accession>A7FIL2</accession>
<reference key="1">
    <citation type="journal article" date="2007" name="PLoS Genet.">
        <title>The complete genome sequence of Yersinia pseudotuberculosis IP31758, the causative agent of Far East scarlet-like fever.</title>
        <authorList>
            <person name="Eppinger M."/>
            <person name="Rosovitz M.J."/>
            <person name="Fricke W.F."/>
            <person name="Rasko D.A."/>
            <person name="Kokorina G."/>
            <person name="Fayolle C."/>
            <person name="Lindler L.E."/>
            <person name="Carniel E."/>
            <person name="Ravel J."/>
        </authorList>
    </citation>
    <scope>NUCLEOTIDE SEQUENCE [LARGE SCALE GENOMIC DNA]</scope>
    <source>
        <strain>IP 31758</strain>
    </source>
</reference>